<protein>
    <recommendedName>
        <fullName evidence="1">Ribosomal RNA large subunit methyltransferase E</fullName>
        <ecNumber evidence="1">2.1.1.166</ecNumber>
    </recommendedName>
    <alternativeName>
        <fullName evidence="1">23S rRNA Um2552 methyltransferase</fullName>
    </alternativeName>
    <alternativeName>
        <fullName evidence="1">rRNA (uridine-2'-O-)-methyltransferase</fullName>
    </alternativeName>
</protein>
<sequence length="209" mass="23297">MSKQKHSASSSRWLKEHFDDKYANEARRKGYRSRAIFKLEEIQQKDKLLKPGMTVVDLGAAPGGWSQYAIGVVGDSGRVIACDILPMDSIAGVSFLQGDFREDAVLEALLERIQPDMVDVVMSDMAPNIAGNNSVDQPRAMYLVELALDMCRQVLAPNGSFVVKVFQGEGFDEYVKEVRNMFKVVKIRKPDSSRARSREVFVVATGYKG</sequence>
<evidence type="ECO:0000255" key="1">
    <source>
        <dbReference type="HAMAP-Rule" id="MF_01547"/>
    </source>
</evidence>
<feature type="chain" id="PRO_0000155550" description="Ribosomal RNA large subunit methyltransferase E">
    <location>
        <begin position="1"/>
        <end position="209"/>
    </location>
</feature>
<feature type="active site" description="Proton acceptor" evidence="1">
    <location>
        <position position="164"/>
    </location>
</feature>
<feature type="binding site" evidence="1">
    <location>
        <position position="63"/>
    </location>
    <ligand>
        <name>S-adenosyl-L-methionine</name>
        <dbReference type="ChEBI" id="CHEBI:59789"/>
    </ligand>
</feature>
<feature type="binding site" evidence="1">
    <location>
        <position position="65"/>
    </location>
    <ligand>
        <name>S-adenosyl-L-methionine</name>
        <dbReference type="ChEBI" id="CHEBI:59789"/>
    </ligand>
</feature>
<feature type="binding site" evidence="1">
    <location>
        <position position="83"/>
    </location>
    <ligand>
        <name>S-adenosyl-L-methionine</name>
        <dbReference type="ChEBI" id="CHEBI:59789"/>
    </ligand>
</feature>
<feature type="binding site" evidence="1">
    <location>
        <position position="99"/>
    </location>
    <ligand>
        <name>S-adenosyl-L-methionine</name>
        <dbReference type="ChEBI" id="CHEBI:59789"/>
    </ligand>
</feature>
<feature type="binding site" evidence="1">
    <location>
        <position position="124"/>
    </location>
    <ligand>
        <name>S-adenosyl-L-methionine</name>
        <dbReference type="ChEBI" id="CHEBI:59789"/>
    </ligand>
</feature>
<accession>Q7MI01</accession>
<comment type="function">
    <text evidence="1">Specifically methylates the uridine in position 2552 of 23S rRNA at the 2'-O position of the ribose in the fully assembled 50S ribosomal subunit.</text>
</comment>
<comment type="catalytic activity">
    <reaction evidence="1">
        <text>uridine(2552) in 23S rRNA + S-adenosyl-L-methionine = 2'-O-methyluridine(2552) in 23S rRNA + S-adenosyl-L-homocysteine + H(+)</text>
        <dbReference type="Rhea" id="RHEA:42720"/>
        <dbReference type="Rhea" id="RHEA-COMP:10202"/>
        <dbReference type="Rhea" id="RHEA-COMP:10203"/>
        <dbReference type="ChEBI" id="CHEBI:15378"/>
        <dbReference type="ChEBI" id="CHEBI:57856"/>
        <dbReference type="ChEBI" id="CHEBI:59789"/>
        <dbReference type="ChEBI" id="CHEBI:65315"/>
        <dbReference type="ChEBI" id="CHEBI:74478"/>
        <dbReference type="EC" id="2.1.1.166"/>
    </reaction>
</comment>
<comment type="subcellular location">
    <subcellularLocation>
        <location evidence="1">Cytoplasm</location>
    </subcellularLocation>
</comment>
<comment type="similarity">
    <text evidence="1">Belongs to the class I-like SAM-binding methyltransferase superfamily. RNA methyltransferase RlmE family.</text>
</comment>
<gene>
    <name evidence="1" type="primary">rlmE</name>
    <name evidence="1" type="synonym">ftsJ</name>
    <name evidence="1" type="synonym">rrmJ</name>
    <name type="ordered locus">VV2716</name>
</gene>
<reference key="1">
    <citation type="journal article" date="2003" name="Genome Res.">
        <title>Comparative genome analysis of Vibrio vulnificus, a marine pathogen.</title>
        <authorList>
            <person name="Chen C.-Y."/>
            <person name="Wu K.-M."/>
            <person name="Chang Y.-C."/>
            <person name="Chang C.-H."/>
            <person name="Tsai H.-C."/>
            <person name="Liao T.-L."/>
            <person name="Liu Y.-M."/>
            <person name="Chen H.-J."/>
            <person name="Shen A.B.-T."/>
            <person name="Li J.-C."/>
            <person name="Su T.-L."/>
            <person name="Shao C.-P."/>
            <person name="Lee C.-T."/>
            <person name="Hor L.-I."/>
            <person name="Tsai S.-F."/>
        </authorList>
    </citation>
    <scope>NUCLEOTIDE SEQUENCE [LARGE SCALE GENOMIC DNA]</scope>
    <source>
        <strain>YJ016</strain>
    </source>
</reference>
<dbReference type="EC" id="2.1.1.166" evidence="1"/>
<dbReference type="EMBL" id="BA000037">
    <property type="protein sequence ID" value="BAC95480.1"/>
    <property type="molecule type" value="Genomic_DNA"/>
</dbReference>
<dbReference type="RefSeq" id="WP_011079609.1">
    <property type="nucleotide sequence ID" value="NC_005139.1"/>
</dbReference>
<dbReference type="SMR" id="Q7MI01"/>
<dbReference type="STRING" id="672.VV93_v1c24320"/>
<dbReference type="GeneID" id="93895940"/>
<dbReference type="KEGG" id="vvy:VV2716"/>
<dbReference type="eggNOG" id="COG0293">
    <property type="taxonomic scope" value="Bacteria"/>
</dbReference>
<dbReference type="HOGENOM" id="CLU_009422_4_0_6"/>
<dbReference type="Proteomes" id="UP000002675">
    <property type="component" value="Chromosome I"/>
</dbReference>
<dbReference type="GO" id="GO:0005737">
    <property type="term" value="C:cytoplasm"/>
    <property type="evidence" value="ECO:0007669"/>
    <property type="project" value="UniProtKB-SubCell"/>
</dbReference>
<dbReference type="GO" id="GO:0008650">
    <property type="term" value="F:rRNA (uridine-2'-O-)-methyltransferase activity"/>
    <property type="evidence" value="ECO:0007669"/>
    <property type="project" value="UniProtKB-UniRule"/>
</dbReference>
<dbReference type="FunFam" id="3.40.50.150:FF:000005">
    <property type="entry name" value="Ribosomal RNA large subunit methyltransferase E"/>
    <property type="match status" value="1"/>
</dbReference>
<dbReference type="Gene3D" id="3.40.50.150">
    <property type="entry name" value="Vaccinia Virus protein VP39"/>
    <property type="match status" value="1"/>
</dbReference>
<dbReference type="HAMAP" id="MF_01547">
    <property type="entry name" value="RNA_methyltr_E"/>
    <property type="match status" value="1"/>
</dbReference>
<dbReference type="InterPro" id="IPR050082">
    <property type="entry name" value="RNA_methyltr_RlmE"/>
</dbReference>
<dbReference type="InterPro" id="IPR002877">
    <property type="entry name" value="RNA_MeTrfase_FtsJ_dom"/>
</dbReference>
<dbReference type="InterPro" id="IPR015507">
    <property type="entry name" value="rRNA-MeTfrase_E"/>
</dbReference>
<dbReference type="InterPro" id="IPR029063">
    <property type="entry name" value="SAM-dependent_MTases_sf"/>
</dbReference>
<dbReference type="NCBIfam" id="NF008390">
    <property type="entry name" value="PRK11188.1"/>
    <property type="match status" value="1"/>
</dbReference>
<dbReference type="PANTHER" id="PTHR10920">
    <property type="entry name" value="RIBOSOMAL RNA METHYLTRANSFERASE"/>
    <property type="match status" value="1"/>
</dbReference>
<dbReference type="PANTHER" id="PTHR10920:SF18">
    <property type="entry name" value="RRNA METHYLTRANSFERASE 2, MITOCHONDRIAL"/>
    <property type="match status" value="1"/>
</dbReference>
<dbReference type="Pfam" id="PF01728">
    <property type="entry name" value="FtsJ"/>
    <property type="match status" value="1"/>
</dbReference>
<dbReference type="PIRSF" id="PIRSF005461">
    <property type="entry name" value="23S_rRNA_mtase"/>
    <property type="match status" value="1"/>
</dbReference>
<dbReference type="SUPFAM" id="SSF53335">
    <property type="entry name" value="S-adenosyl-L-methionine-dependent methyltransferases"/>
    <property type="match status" value="1"/>
</dbReference>
<organism>
    <name type="scientific">Vibrio vulnificus (strain YJ016)</name>
    <dbReference type="NCBI Taxonomy" id="196600"/>
    <lineage>
        <taxon>Bacteria</taxon>
        <taxon>Pseudomonadati</taxon>
        <taxon>Pseudomonadota</taxon>
        <taxon>Gammaproteobacteria</taxon>
        <taxon>Vibrionales</taxon>
        <taxon>Vibrionaceae</taxon>
        <taxon>Vibrio</taxon>
    </lineage>
</organism>
<keyword id="KW-0963">Cytoplasm</keyword>
<keyword id="KW-0489">Methyltransferase</keyword>
<keyword id="KW-0698">rRNA processing</keyword>
<keyword id="KW-0949">S-adenosyl-L-methionine</keyword>
<keyword id="KW-0808">Transferase</keyword>
<name>RLME_VIBVY</name>
<proteinExistence type="inferred from homology"/>